<reference key="1">
    <citation type="journal article" date="2005" name="BMC Plant Biol.">
        <title>Callose (beta-1,3 glucan) is essential for Arabidopsis pollen wall patterning, but not tube growth.</title>
        <authorList>
            <person name="Nishikawa S."/>
            <person name="Zinkl G.M."/>
            <person name="Swanson R.J."/>
            <person name="Maruyama D."/>
            <person name="Preuss D."/>
        </authorList>
    </citation>
    <scope>NUCLEOTIDE SEQUENCE [MRNA]</scope>
    <scope>FUNCTION</scope>
    <scope>DEVELOPMENTAL STAGE</scope>
    <scope>IDENTIFICATION</scope>
    <scope>MUTAGENESIS OF GLY-651</scope>
    <scope>DISRUPTION PHENOTYPE</scope>
    <source>
        <strain>cv. Landsberg erecta</strain>
    </source>
</reference>
<reference key="2">
    <citation type="journal article" date="1999" name="Nature">
        <title>Sequence and analysis of chromosome 2 of the plant Arabidopsis thaliana.</title>
        <authorList>
            <person name="Lin X."/>
            <person name="Kaul S."/>
            <person name="Rounsley S.D."/>
            <person name="Shea T.P."/>
            <person name="Benito M.-I."/>
            <person name="Town C.D."/>
            <person name="Fujii C.Y."/>
            <person name="Mason T.M."/>
            <person name="Bowman C.L."/>
            <person name="Barnstead M.E."/>
            <person name="Feldblyum T.V."/>
            <person name="Buell C.R."/>
            <person name="Ketchum K.A."/>
            <person name="Lee J.J."/>
            <person name="Ronning C.M."/>
            <person name="Koo H.L."/>
            <person name="Moffat K.S."/>
            <person name="Cronin L.A."/>
            <person name="Shen M."/>
            <person name="Pai G."/>
            <person name="Van Aken S."/>
            <person name="Umayam L."/>
            <person name="Tallon L.J."/>
            <person name="Gill J.E."/>
            <person name="Adams M.D."/>
            <person name="Carrera A.J."/>
            <person name="Creasy T.H."/>
            <person name="Goodman H.M."/>
            <person name="Somerville C.R."/>
            <person name="Copenhaver G.P."/>
            <person name="Preuss D."/>
            <person name="Nierman W.C."/>
            <person name="White O."/>
            <person name="Eisen J.A."/>
            <person name="Salzberg S.L."/>
            <person name="Fraser C.M."/>
            <person name="Venter J.C."/>
        </authorList>
    </citation>
    <scope>NUCLEOTIDE SEQUENCE [LARGE SCALE GENOMIC DNA]</scope>
    <source>
        <strain>cv. Columbia</strain>
    </source>
</reference>
<reference key="3">
    <citation type="journal article" date="2017" name="Plant J.">
        <title>Araport11: a complete reannotation of the Arabidopsis thaliana reference genome.</title>
        <authorList>
            <person name="Cheng C.Y."/>
            <person name="Krishnakumar V."/>
            <person name="Chan A.P."/>
            <person name="Thibaud-Nissen F."/>
            <person name="Schobel S."/>
            <person name="Town C.D."/>
        </authorList>
    </citation>
    <scope>GENOME REANNOTATION</scope>
    <source>
        <strain>cv. Columbia</strain>
    </source>
</reference>
<reference key="4">
    <citation type="journal article" date="2001" name="Plant Cell">
        <title>A cell plate-specific callose synthase and its interaction with phragmoplastin.</title>
        <authorList>
            <person name="Hong Z."/>
            <person name="Delauney A.J."/>
            <person name="Verma D.P.S."/>
        </authorList>
    </citation>
    <scope>GENE FAMILY</scope>
    <scope>NOMENCLATURE</scope>
</reference>
<reference key="5">
    <citation type="journal article" date="2005" name="Plant J.">
        <title>Callose synthase (CalS5) is required for exine formation during microgametogenesis and for pollen viability in Arabidopsis.</title>
        <authorList>
            <person name="Dong X."/>
            <person name="Hong Z."/>
            <person name="Sivaramakrishnan M."/>
            <person name="Mahfouz M."/>
            <person name="Verma D.P.S."/>
        </authorList>
    </citation>
    <scope>FUNCTION</scope>
    <scope>DEVELOPMENTAL STAGE</scope>
    <scope>MUTAGENESIS OF GLY-651</scope>
</reference>
<reference key="6">
    <citation type="journal article" date="2005" name="Plant Mol. Biol.">
        <title>Two callose synthases, GSL1 and GSL5, play an essential and redundant role in plant and pollen development and in fertility.</title>
        <authorList>
            <person name="Enns L.C."/>
            <person name="Kanaoka M.M."/>
            <person name="Torii K.U."/>
            <person name="Comai L."/>
            <person name="Okada K."/>
            <person name="Cleland R.E."/>
        </authorList>
    </citation>
    <scope>NOMENCLATURE</scope>
</reference>
<proteinExistence type="evidence at protein level"/>
<feature type="chain" id="PRO_0000334577" description="Callose synthase 5">
    <location>
        <begin position="1"/>
        <end position="1923"/>
    </location>
</feature>
<feature type="topological domain" description="Cytoplasmic" evidence="1">
    <location>
        <begin position="1"/>
        <end position="481"/>
    </location>
</feature>
<feature type="transmembrane region" description="Helical" evidence="1">
    <location>
        <begin position="482"/>
        <end position="502"/>
    </location>
</feature>
<feature type="topological domain" description="Extracellular" evidence="1">
    <location>
        <begin position="503"/>
        <end position="521"/>
    </location>
</feature>
<feature type="transmembrane region" description="Helical" evidence="1">
    <location>
        <begin position="522"/>
        <end position="542"/>
    </location>
</feature>
<feature type="topological domain" description="Cytoplasmic" evidence="1">
    <location>
        <begin position="543"/>
        <end position="559"/>
    </location>
</feature>
<feature type="transmembrane region" description="Helical" evidence="1">
    <location>
        <begin position="560"/>
        <end position="580"/>
    </location>
</feature>
<feature type="topological domain" description="Extracellular" evidence="1">
    <location>
        <begin position="581"/>
        <end position="601"/>
    </location>
</feature>
<feature type="transmembrane region" description="Helical" evidence="1">
    <location>
        <begin position="602"/>
        <end position="622"/>
    </location>
</feature>
<feature type="topological domain" description="Cytoplasmic" evidence="1">
    <location>
        <begin position="623"/>
        <end position="658"/>
    </location>
</feature>
<feature type="transmembrane region" description="Helical" evidence="1">
    <location>
        <begin position="659"/>
        <end position="679"/>
    </location>
</feature>
<feature type="topological domain" description="Extracellular" evidence="1">
    <location>
        <begin position="680"/>
        <end position="719"/>
    </location>
</feature>
<feature type="transmembrane region" description="Helical" evidence="1">
    <location>
        <begin position="720"/>
        <end position="740"/>
    </location>
</feature>
<feature type="topological domain" description="Cytoplasmic" evidence="1">
    <location>
        <begin position="741"/>
        <end position="1486"/>
    </location>
</feature>
<feature type="transmembrane region" description="Helical" evidence="1">
    <location>
        <begin position="1487"/>
        <end position="1507"/>
    </location>
</feature>
<feature type="topological domain" description="Extracellular" evidence="1">
    <location>
        <begin position="1508"/>
        <end position="1535"/>
    </location>
</feature>
<feature type="transmembrane region" description="Helical" evidence="1">
    <location>
        <begin position="1536"/>
        <end position="1556"/>
    </location>
</feature>
<feature type="topological domain" description="Cytoplasmic" evidence="1">
    <location>
        <begin position="1557"/>
        <end position="1566"/>
    </location>
</feature>
<feature type="transmembrane region" description="Helical" evidence="1">
    <location>
        <begin position="1567"/>
        <end position="1587"/>
    </location>
</feature>
<feature type="topological domain" description="Extracellular" evidence="1">
    <location>
        <begin position="1588"/>
        <end position="1630"/>
    </location>
</feature>
<feature type="transmembrane region" description="Helical" evidence="1">
    <location>
        <begin position="1631"/>
        <end position="1651"/>
    </location>
</feature>
<feature type="topological domain" description="Cytoplasmic" evidence="1">
    <location>
        <begin position="1652"/>
        <end position="1657"/>
    </location>
</feature>
<feature type="transmembrane region" description="Helical" evidence="1">
    <location>
        <begin position="1658"/>
        <end position="1678"/>
    </location>
</feature>
<feature type="topological domain" description="Extracellular" evidence="1">
    <location>
        <begin position="1679"/>
        <end position="1732"/>
    </location>
</feature>
<feature type="transmembrane region" description="Helical" evidence="1">
    <location>
        <begin position="1733"/>
        <end position="1755"/>
    </location>
</feature>
<feature type="topological domain" description="Cytoplasmic" evidence="1">
    <location>
        <begin position="1756"/>
        <end position="1766"/>
    </location>
</feature>
<feature type="transmembrane region" description="Helical" evidence="1">
    <location>
        <begin position="1767"/>
        <end position="1787"/>
    </location>
</feature>
<feature type="topological domain" description="Extracellular" evidence="1">
    <location>
        <begin position="1788"/>
        <end position="1803"/>
    </location>
</feature>
<feature type="transmembrane region" description="Helical" evidence="1">
    <location>
        <begin position="1804"/>
        <end position="1824"/>
    </location>
</feature>
<feature type="topological domain" description="Cytoplasmic" evidence="1">
    <location>
        <position position="1825"/>
    </location>
</feature>
<feature type="transmembrane region" description="Helical" evidence="1">
    <location>
        <begin position="1826"/>
        <end position="1846"/>
    </location>
</feature>
<feature type="topological domain" description="Extracellular" evidence="1">
    <location>
        <begin position="1847"/>
        <end position="1873"/>
    </location>
</feature>
<feature type="transmembrane region" description="Helical" evidence="1">
    <location>
        <begin position="1874"/>
        <end position="1894"/>
    </location>
</feature>
<feature type="topological domain" description="Cytoplasmic" evidence="1">
    <location>
        <begin position="1895"/>
        <end position="1923"/>
    </location>
</feature>
<feature type="region of interest" description="Disordered" evidence="2">
    <location>
        <begin position="1"/>
        <end position="22"/>
    </location>
</feature>
<feature type="compositionally biased region" description="Polar residues" evidence="2">
    <location>
        <begin position="1"/>
        <end position="10"/>
    </location>
</feature>
<feature type="glycosylation site" description="N-linked (GlcNAc...) asparagine" evidence="1">
    <location>
        <position position="1710"/>
    </location>
</feature>
<feature type="mutagenesis site" description="In cals5-4; loss of exine." evidence="3 4">
    <original>G</original>
    <variation>I</variation>
    <location>
        <position position="651"/>
    </location>
</feature>
<sequence>MAQSSTSHDSGPQGLMRRPSRSAATTVSIEVFDHEVVPASLGTIAPILRVAAEIEHERPRVAYLCRFYAFEKAHRLDPSSGGRGVRQFKTLLFQRLERDNASSLASRVKKTDGREVESFYQQYYEHYVRALDQGDQADRAQLGKAYQTAGVLFEVLMAVNKSEKVEAVAPEIIAAARDVQEKNEIYAPYNILPLDSAGASQSVMQLEEVKAAVAALGNTRGLNWPSGFEQHRKKTGNLDLLDWLRAMFGFQRDNVRNQREHLVCLFADNHIRLTPKPEPLNKLDDRAVDTVMSKLFKNYKNWCKFLGRKHSLRLPQAAQDIQQRKILYMGLYLLIWGEAANIRFMPECLCYIFHNMAYELHGLLAGNVSIVTGENIKPSYGGDDEAFLRKVITPIYRVVQTEANKNANGKAAHSDWSNYDDLNEYFWTPDCFSLGWPMRDDGDLFKSTRDTTQGKKGSFRKAGRTGKSNFTETRTFWHIYHSFDRLWTFYLLALQAMIILAFERVELREILRKDVLYALSSIFITAAFLRFLQSVLDVILNFPGFHRWKFTDVLRNILKIVVSLAWCVVLPLCYAQSVSFAPGKLKQWLSFLPQVKGVPPLYIMAVALYLLPNVLAAIMFIFPMLRRWIENSDWHIFRLLLWWSQPRIYVGRGMHESQIALIKYTIFWLLLFCCKFAFSYFLQVKLLVKPTNAIMSIRHVKYKWHEFFPNAEHNYGAVVSLWLPVILVYFMDTQIWYAIFSTICGGVIGAFDRLGEIRTLGMLRSRFQSLPGAFNTYLVPSDKTRRRGFSLSKRFAEVTAARRTEAAKFSQLWNEIISSFREEDLISDREMDLLLVPYTSDPSLKLIQWPPFLLASKIPIALDMAAQFRTRDSDLWKRICADEYMKCAVIECYESFKHVLHTLVIGENEKRIIGIIIKEVESNISKNSFLSNFRMAPLPALCSKFVELVGILKNADPAKRDTVVLLLQDMLEVVTRDMMQNENRELVELGHTNKESGRQLFAGTDAKPAILFPPVATAQWHEQISRLHLLLTVKESAMDVPTNLEAQRRIAFFTNSLFMDMPRAPRVRNMLSFSVLTPYYSEETVYSKNDLEMENEDGVSVVYYLQKIFPDEWTNFLERLDCKDETSVLESEENILQLRHWVSLRGQTLFRTVRGMMYYRRALKLQAFLDMANETEILAGYKAISEPTEEDKKSQRSLYTQLEAVADLKFTYVATCQNYGNQKRSGDRRATDILNLMVNNPSLRVAYIDEVEEREGGKVQKVFYSVLIKAVDNLDQEIYRIKLPGPAKIGEGKPENQNHALIFTRGEALQAIDMNQDHYLEEALKMRNLLEEFNEDHGVRAPTILGFREHIFTGSVSSLAWFMSNQETSFVTIGQRVLASPLKVRFHYGHPDVFDRIFHITRGGISKASRGINLSEDIFAGFNSTLRRGNVTHHEYIQVGKGRDVGLNQISLFEAKVACGNGEQTLSRDLYRLGHRFDFFRMMSCYFTTVGFYISSMIVVLTVYAFLYGRLYLSLSGVEEAIVKFAAAKGDSSLKAAMASQSVVQLGLLMTLPMVMEIGLERGFRTALSDLIIMQLQLAPVFFTFSLGTKVHYYGRTILHGGSKYRATGRGFVVKHEKFAENYRMYSRSHFVKGMELMVLLICYRIYGKAAEDSVGYALVMGSTWFLVGSWLFAPFFFNPSGFEWQKIVDDWDDWNKWISSRGGIGVPANKSWESWWEEEQEHLLHSGFFGKFWEIFLSLRYFIYQYGIVYQLNLTKESRMGKQHSIIVYGLSWLVIVAVMIVLKIVSMGRKKFSADFQLMFRLLKLFLFIGSVVIVGMLFHFLKLTVGDIMQSLLAFLPTGWALLQISQVARPLMKTVGMWGSVKALARGYEYIMGVVIFMPVTVLAWFPFVSEFQTRLLFNQAFSRGLQIQRILAGGKKQK</sequence>
<gene>
    <name type="primary">CALS5</name>
    <name type="synonym">GSL2</name>
    <name type="synonym">LAP1</name>
    <name type="ordered locus">At2g13680</name>
    <name type="ORF">F13J11.3</name>
    <name type="ORF">T10F5.22</name>
</gene>
<evidence type="ECO:0000255" key="1"/>
<evidence type="ECO:0000256" key="2">
    <source>
        <dbReference type="SAM" id="MobiDB-lite"/>
    </source>
</evidence>
<evidence type="ECO:0000269" key="3">
    <source>
    </source>
</evidence>
<evidence type="ECO:0000269" key="4">
    <source>
    </source>
</evidence>
<evidence type="ECO:0000305" key="5"/>
<protein>
    <recommendedName>
        <fullName>Callose synthase 5</fullName>
        <ecNumber>2.4.1.34</ecNumber>
    </recommendedName>
    <alternativeName>
        <fullName>1,3-beta-glucan synthase</fullName>
    </alternativeName>
    <alternativeName>
        <fullName>Protein GLUCAN SYNTHASE-LIKE 2</fullName>
    </alternativeName>
    <alternativeName>
        <fullName>Protein LESS ADHERENT POLLEN 1</fullName>
    </alternativeName>
</protein>
<keyword id="KW-1003">Cell membrane</keyword>
<keyword id="KW-0133">Cell shape</keyword>
<keyword id="KW-0961">Cell wall biogenesis/degradation</keyword>
<keyword id="KW-0325">Glycoprotein</keyword>
<keyword id="KW-0328">Glycosyltransferase</keyword>
<keyword id="KW-0472">Membrane</keyword>
<keyword id="KW-1185">Reference proteome</keyword>
<keyword id="KW-0808">Transferase</keyword>
<keyword id="KW-0812">Transmembrane</keyword>
<keyword id="KW-1133">Transmembrane helix</keyword>
<organism>
    <name type="scientific">Arabidopsis thaliana</name>
    <name type="common">Mouse-ear cress</name>
    <dbReference type="NCBI Taxonomy" id="3702"/>
    <lineage>
        <taxon>Eukaryota</taxon>
        <taxon>Viridiplantae</taxon>
        <taxon>Streptophyta</taxon>
        <taxon>Embryophyta</taxon>
        <taxon>Tracheophyta</taxon>
        <taxon>Spermatophyta</taxon>
        <taxon>Magnoliopsida</taxon>
        <taxon>eudicotyledons</taxon>
        <taxon>Gunneridae</taxon>
        <taxon>Pentapetalae</taxon>
        <taxon>rosids</taxon>
        <taxon>malvids</taxon>
        <taxon>Brassicales</taxon>
        <taxon>Brassicaceae</taxon>
        <taxon>Camelineae</taxon>
        <taxon>Arabidopsis</taxon>
    </lineage>
</organism>
<name>CALS5_ARATH</name>
<dbReference type="EC" id="2.4.1.34"/>
<dbReference type="EMBL" id="AY337762">
    <property type="protein sequence ID" value="AAR00322.1"/>
    <property type="molecule type" value="mRNA"/>
</dbReference>
<dbReference type="EMBL" id="AC006436">
    <property type="protein sequence ID" value="AAM15250.1"/>
    <property type="status" value="ALT_SEQ"/>
    <property type="molecule type" value="Genomic_DNA"/>
</dbReference>
<dbReference type="EMBL" id="AC007063">
    <property type="protein sequence ID" value="AAM15369.1"/>
    <property type="status" value="ALT_SEQ"/>
    <property type="molecule type" value="Genomic_DNA"/>
</dbReference>
<dbReference type="EMBL" id="CP002685">
    <property type="protein sequence ID" value="AEC06254.1"/>
    <property type="molecule type" value="Genomic_DNA"/>
</dbReference>
<dbReference type="EMBL" id="BK001470">
    <property type="protein sequence ID" value="DAA01511.1"/>
    <property type="molecule type" value="mRNA"/>
</dbReference>
<dbReference type="RefSeq" id="NP_849953.2">
    <property type="nucleotide sequence ID" value="NM_179622.4"/>
</dbReference>
<dbReference type="SMR" id="Q3B724"/>
<dbReference type="FunCoup" id="Q3B724">
    <property type="interactions" value="270"/>
</dbReference>
<dbReference type="STRING" id="3702.Q3B724"/>
<dbReference type="CAZy" id="GT48">
    <property type="family name" value="Glycosyltransferase Family 48"/>
</dbReference>
<dbReference type="TCDB" id="9.B.119.1.2">
    <property type="family name" value="the glycan synthase, fks1 (fks1) family"/>
</dbReference>
<dbReference type="GlyCosmos" id="Q3B724">
    <property type="glycosylation" value="1 site, No reported glycans"/>
</dbReference>
<dbReference type="GlyGen" id="Q3B724">
    <property type="glycosylation" value="1 site"/>
</dbReference>
<dbReference type="PaxDb" id="3702-AT2G13680.1"/>
<dbReference type="ProteomicsDB" id="240314"/>
<dbReference type="EnsemblPlants" id="AT2G13680.1">
    <property type="protein sequence ID" value="AT2G13680.1"/>
    <property type="gene ID" value="AT2G13680"/>
</dbReference>
<dbReference type="GeneID" id="815852"/>
<dbReference type="Gramene" id="AT2G13680.1">
    <property type="protein sequence ID" value="AT2G13680.1"/>
    <property type="gene ID" value="AT2G13680"/>
</dbReference>
<dbReference type="KEGG" id="ath:AT2G13680"/>
<dbReference type="Araport" id="AT2G13680"/>
<dbReference type="TAIR" id="AT2G13680">
    <property type="gene designation" value="CALS5"/>
</dbReference>
<dbReference type="eggNOG" id="KOG0916">
    <property type="taxonomic scope" value="Eukaryota"/>
</dbReference>
<dbReference type="HOGENOM" id="CLU_000742_0_0_1"/>
<dbReference type="InParanoid" id="Q3B724"/>
<dbReference type="OMA" id="ENEPMHQ"/>
<dbReference type="PhylomeDB" id="Q3B724"/>
<dbReference type="BioCyc" id="ARA:AT2G13680-MONOMER"/>
<dbReference type="PRO" id="PR:Q3B724"/>
<dbReference type="Proteomes" id="UP000006548">
    <property type="component" value="Chromosome 2"/>
</dbReference>
<dbReference type="ExpressionAtlas" id="Q3B724">
    <property type="expression patterns" value="baseline and differential"/>
</dbReference>
<dbReference type="GO" id="GO:0000148">
    <property type="term" value="C:1,3-beta-D-glucan synthase complex"/>
    <property type="evidence" value="ECO:0007669"/>
    <property type="project" value="InterPro"/>
</dbReference>
<dbReference type="GO" id="GO:0005886">
    <property type="term" value="C:plasma membrane"/>
    <property type="evidence" value="ECO:0007669"/>
    <property type="project" value="UniProtKB-SubCell"/>
</dbReference>
<dbReference type="GO" id="GO:0003843">
    <property type="term" value="F:1,3-beta-D-glucan synthase activity"/>
    <property type="evidence" value="ECO:0007669"/>
    <property type="project" value="UniProtKB-EC"/>
</dbReference>
<dbReference type="GO" id="GO:0006075">
    <property type="term" value="P:(1-&gt;3)-beta-D-glucan biosynthetic process"/>
    <property type="evidence" value="ECO:0000315"/>
    <property type="project" value="TAIR"/>
</dbReference>
<dbReference type="GO" id="GO:0071555">
    <property type="term" value="P:cell wall organization"/>
    <property type="evidence" value="ECO:0007669"/>
    <property type="project" value="UniProtKB-KW"/>
</dbReference>
<dbReference type="GO" id="GO:0009556">
    <property type="term" value="P:microsporogenesis"/>
    <property type="evidence" value="ECO:0000315"/>
    <property type="project" value="TAIR"/>
</dbReference>
<dbReference type="GO" id="GO:0009555">
    <property type="term" value="P:pollen development"/>
    <property type="evidence" value="ECO:0000315"/>
    <property type="project" value="TAIR"/>
</dbReference>
<dbReference type="GO" id="GO:0009846">
    <property type="term" value="P:pollen germination"/>
    <property type="evidence" value="ECO:0000315"/>
    <property type="project" value="TAIR"/>
</dbReference>
<dbReference type="GO" id="GO:0009860">
    <property type="term" value="P:pollen tube growth"/>
    <property type="evidence" value="ECO:0000315"/>
    <property type="project" value="TAIR"/>
</dbReference>
<dbReference type="GO" id="GO:0010208">
    <property type="term" value="P:pollen wall assembly"/>
    <property type="evidence" value="ECO:0000315"/>
    <property type="project" value="TAIR"/>
</dbReference>
<dbReference type="GO" id="GO:0008360">
    <property type="term" value="P:regulation of cell shape"/>
    <property type="evidence" value="ECO:0007669"/>
    <property type="project" value="UniProtKB-KW"/>
</dbReference>
<dbReference type="GO" id="GO:0080092">
    <property type="term" value="P:regulation of pollen tube growth"/>
    <property type="evidence" value="ECO:0000315"/>
    <property type="project" value="TAIR"/>
</dbReference>
<dbReference type="FunFam" id="1.25.40.270:FF:000002">
    <property type="entry name" value="callose synthase 3"/>
    <property type="match status" value="1"/>
</dbReference>
<dbReference type="Gene3D" id="1.25.40.270">
    <property type="entry name" value="Vacuolar protein sorting-associated protein vta1"/>
    <property type="match status" value="1"/>
</dbReference>
<dbReference type="InterPro" id="IPR026899">
    <property type="entry name" value="FKS1-like_dom1"/>
</dbReference>
<dbReference type="InterPro" id="IPR003440">
    <property type="entry name" value="Glyco_trans_48_dom"/>
</dbReference>
<dbReference type="InterPro" id="IPR039431">
    <property type="entry name" value="Vta1/CALS_N"/>
</dbReference>
<dbReference type="InterPro" id="IPR023175">
    <property type="entry name" value="Vta1/CALS_N_sf"/>
</dbReference>
<dbReference type="PANTHER" id="PTHR12741:SF106">
    <property type="entry name" value="CALLOSE SYNTHASE 5"/>
    <property type="match status" value="1"/>
</dbReference>
<dbReference type="PANTHER" id="PTHR12741">
    <property type="entry name" value="LYST-INTERACTING PROTEIN LIP5 DOPAMINE RESPONSIVE PROTEIN DRG-1"/>
    <property type="match status" value="1"/>
</dbReference>
<dbReference type="Pfam" id="PF14288">
    <property type="entry name" value="FKS1_dom1"/>
    <property type="match status" value="1"/>
</dbReference>
<dbReference type="Pfam" id="PF02364">
    <property type="entry name" value="Glucan_synthase"/>
    <property type="match status" value="2"/>
</dbReference>
<dbReference type="Pfam" id="PF04652">
    <property type="entry name" value="Vta1"/>
    <property type="match status" value="1"/>
</dbReference>
<dbReference type="SMART" id="SM01205">
    <property type="entry name" value="FKS1_dom1"/>
    <property type="match status" value="1"/>
</dbReference>
<comment type="function">
    <text evidence="3 4">Required for the formation of the callose wall separating the tetraspores (interstitial wall) and surrounding the pollen mother cells (peripheral wall). Required for exine formation on pollen wall. May be involved in callose synthesis during pollen tube growth. During plant growth and development, callose is found as a transitory component of the cell plate in dividing cells, is a major component of pollen mother cell walls and pollen tubes, and is found as a structural component of plasmodesmatal canals.</text>
</comment>
<comment type="catalytic activity">
    <reaction>
        <text>[(1-&gt;3)-beta-D-glucosyl](n) + UDP-alpha-D-glucose = [(1-&gt;3)-beta-D-glucosyl](n+1) + UDP + H(+)</text>
        <dbReference type="Rhea" id="RHEA:21476"/>
        <dbReference type="Rhea" id="RHEA-COMP:11146"/>
        <dbReference type="Rhea" id="RHEA-COMP:14303"/>
        <dbReference type="ChEBI" id="CHEBI:15378"/>
        <dbReference type="ChEBI" id="CHEBI:37671"/>
        <dbReference type="ChEBI" id="CHEBI:58223"/>
        <dbReference type="ChEBI" id="CHEBI:58885"/>
        <dbReference type="EC" id="2.4.1.34"/>
    </reaction>
</comment>
<comment type="subcellular location">
    <subcellularLocation>
        <location evidence="5">Cell membrane</location>
        <topology evidence="5">Multi-pass membrane protein</topology>
    </subcellularLocation>
</comment>
<comment type="developmental stage">
    <text evidence="3 4">Expressed throughout pollen development, both in pollen mother cells and in developing and mature pollen grains. Expressed in growing pollen tube.</text>
</comment>
<comment type="disruption phenotype">
    <text evidence="4">Plants develop deformed and inviable pollen grains which do not have exin.</text>
</comment>
<comment type="similarity">
    <text evidence="5">Belongs to the glycosyltransferase 48 family.</text>
</comment>
<comment type="sequence caution" evidence="5">
    <conflict type="erroneous gene model prediction">
        <sequence resource="EMBL-CDS" id="AAM15250"/>
    </conflict>
</comment>
<comment type="sequence caution" evidence="5">
    <conflict type="erroneous gene model prediction">
        <sequence resource="EMBL-CDS" id="AAM15369"/>
    </conflict>
</comment>
<accession>Q3B724</accession>
<accession>Q8S8D4</accession>
<accession>Q8S8G9</accession>